<feature type="chain" id="PRO_1000073361" description="ATP synthase subunit beta">
    <location>
        <begin position="1"/>
        <end position="458"/>
    </location>
</feature>
<feature type="binding site" evidence="1">
    <location>
        <begin position="148"/>
        <end position="155"/>
    </location>
    <ligand>
        <name>ATP</name>
        <dbReference type="ChEBI" id="CHEBI:30616"/>
    </ligand>
</feature>
<proteinExistence type="inferred from homology"/>
<sequence length="458" mass="49737">MSAGKIVQIIGAVIDVEFPQNAVPKVYDALKVEEGGLTLEVQQQLGGGVVRCIALGTSDGLKRGLAVKNTGNPISVPVGTKTLGRIMNVLGEPIDQKGEIGAEETWAIHREAPSYEDQSNSTELLETGIKVIDLICPFAKGGKVGLFGGAGVGKTVNMMELIRNIAIEHSGFSVFAGVGERTREGNDFYHEMTESNVLDKVSLVYGQMNEPPGNRLRVALTGLTMAEKFRDEGRDVLFFVDNIYRYTLAGTEVSALLGRMPSAVGYQPTLAEEMGVLQERITSTKTGSITSVQAVYVPADDLTDPSPATTFAHLDSTVVLSRNIASLGIYPAVDPLDSTSRQLDPQVVGQEHYDVARGVQGILQRYKELKDIIAILSMDELSEDDKLVVARARKIERFLSQPFFVAEVFTGSPGKYVSLKDTIRGFKGILEGEYDHIPEQAFYMVGSIEEVVEKAKNM</sequence>
<accession>A6VL57</accession>
<organism>
    <name type="scientific">Actinobacillus succinogenes (strain ATCC 55618 / DSM 22257 / CCUG 43843 / 130Z)</name>
    <dbReference type="NCBI Taxonomy" id="339671"/>
    <lineage>
        <taxon>Bacteria</taxon>
        <taxon>Pseudomonadati</taxon>
        <taxon>Pseudomonadota</taxon>
        <taxon>Gammaproteobacteria</taxon>
        <taxon>Pasteurellales</taxon>
        <taxon>Pasteurellaceae</taxon>
        <taxon>Actinobacillus</taxon>
    </lineage>
</organism>
<name>ATPB_ACTSZ</name>
<gene>
    <name evidence="1" type="primary">atpD</name>
    <name type="ordered locus">Asuc_0326</name>
</gene>
<dbReference type="EC" id="7.1.2.2" evidence="1"/>
<dbReference type="EMBL" id="CP000746">
    <property type="protein sequence ID" value="ABR73704.1"/>
    <property type="molecule type" value="Genomic_DNA"/>
</dbReference>
<dbReference type="RefSeq" id="WP_011978979.1">
    <property type="nucleotide sequence ID" value="NC_009655.1"/>
</dbReference>
<dbReference type="SMR" id="A6VL57"/>
<dbReference type="STRING" id="339671.Asuc_0326"/>
<dbReference type="KEGG" id="asu:Asuc_0326"/>
<dbReference type="eggNOG" id="COG0055">
    <property type="taxonomic scope" value="Bacteria"/>
</dbReference>
<dbReference type="HOGENOM" id="CLU_022398_0_2_6"/>
<dbReference type="OrthoDB" id="9801639at2"/>
<dbReference type="Proteomes" id="UP000001114">
    <property type="component" value="Chromosome"/>
</dbReference>
<dbReference type="GO" id="GO:0005886">
    <property type="term" value="C:plasma membrane"/>
    <property type="evidence" value="ECO:0007669"/>
    <property type="project" value="UniProtKB-SubCell"/>
</dbReference>
<dbReference type="GO" id="GO:0045259">
    <property type="term" value="C:proton-transporting ATP synthase complex"/>
    <property type="evidence" value="ECO:0007669"/>
    <property type="project" value="UniProtKB-KW"/>
</dbReference>
<dbReference type="GO" id="GO:0005524">
    <property type="term" value="F:ATP binding"/>
    <property type="evidence" value="ECO:0007669"/>
    <property type="project" value="UniProtKB-UniRule"/>
</dbReference>
<dbReference type="GO" id="GO:0016887">
    <property type="term" value="F:ATP hydrolysis activity"/>
    <property type="evidence" value="ECO:0007669"/>
    <property type="project" value="InterPro"/>
</dbReference>
<dbReference type="GO" id="GO:0046933">
    <property type="term" value="F:proton-transporting ATP synthase activity, rotational mechanism"/>
    <property type="evidence" value="ECO:0007669"/>
    <property type="project" value="UniProtKB-UniRule"/>
</dbReference>
<dbReference type="CDD" id="cd18110">
    <property type="entry name" value="ATP-synt_F1_beta_C"/>
    <property type="match status" value="1"/>
</dbReference>
<dbReference type="CDD" id="cd18115">
    <property type="entry name" value="ATP-synt_F1_beta_N"/>
    <property type="match status" value="1"/>
</dbReference>
<dbReference type="CDD" id="cd01133">
    <property type="entry name" value="F1-ATPase_beta_CD"/>
    <property type="match status" value="1"/>
</dbReference>
<dbReference type="FunFam" id="1.10.1140.10:FF:000001">
    <property type="entry name" value="ATP synthase subunit beta"/>
    <property type="match status" value="1"/>
</dbReference>
<dbReference type="FunFam" id="2.40.10.170:FF:000003">
    <property type="entry name" value="ATP synthase subunit beta"/>
    <property type="match status" value="1"/>
</dbReference>
<dbReference type="FunFam" id="3.40.50.300:FF:000004">
    <property type="entry name" value="ATP synthase subunit beta"/>
    <property type="match status" value="1"/>
</dbReference>
<dbReference type="Gene3D" id="2.40.10.170">
    <property type="match status" value="1"/>
</dbReference>
<dbReference type="Gene3D" id="1.10.1140.10">
    <property type="entry name" value="Bovine Mitochondrial F1-atpase, Atp Synthase Beta Chain, Chain D, domain 3"/>
    <property type="match status" value="1"/>
</dbReference>
<dbReference type="Gene3D" id="3.40.50.300">
    <property type="entry name" value="P-loop containing nucleotide triphosphate hydrolases"/>
    <property type="match status" value="1"/>
</dbReference>
<dbReference type="HAMAP" id="MF_01347">
    <property type="entry name" value="ATP_synth_beta_bact"/>
    <property type="match status" value="1"/>
</dbReference>
<dbReference type="InterPro" id="IPR003593">
    <property type="entry name" value="AAA+_ATPase"/>
</dbReference>
<dbReference type="InterPro" id="IPR055190">
    <property type="entry name" value="ATP-synt_VA_C"/>
</dbReference>
<dbReference type="InterPro" id="IPR005722">
    <property type="entry name" value="ATP_synth_F1_bsu"/>
</dbReference>
<dbReference type="InterPro" id="IPR020003">
    <property type="entry name" value="ATPase_a/bsu_AS"/>
</dbReference>
<dbReference type="InterPro" id="IPR050053">
    <property type="entry name" value="ATPase_alpha/beta_chains"/>
</dbReference>
<dbReference type="InterPro" id="IPR004100">
    <property type="entry name" value="ATPase_F1/V1/A1_a/bsu_N"/>
</dbReference>
<dbReference type="InterPro" id="IPR036121">
    <property type="entry name" value="ATPase_F1/V1/A1_a/bsu_N_sf"/>
</dbReference>
<dbReference type="InterPro" id="IPR000194">
    <property type="entry name" value="ATPase_F1/V1/A1_a/bsu_nucl-bd"/>
</dbReference>
<dbReference type="InterPro" id="IPR024034">
    <property type="entry name" value="ATPase_F1/V1_b/a_C"/>
</dbReference>
<dbReference type="InterPro" id="IPR027417">
    <property type="entry name" value="P-loop_NTPase"/>
</dbReference>
<dbReference type="NCBIfam" id="TIGR01039">
    <property type="entry name" value="atpD"/>
    <property type="match status" value="1"/>
</dbReference>
<dbReference type="PANTHER" id="PTHR15184">
    <property type="entry name" value="ATP SYNTHASE"/>
    <property type="match status" value="1"/>
</dbReference>
<dbReference type="PANTHER" id="PTHR15184:SF71">
    <property type="entry name" value="ATP SYNTHASE SUBUNIT BETA, MITOCHONDRIAL"/>
    <property type="match status" value="1"/>
</dbReference>
<dbReference type="Pfam" id="PF00006">
    <property type="entry name" value="ATP-synt_ab"/>
    <property type="match status" value="1"/>
</dbReference>
<dbReference type="Pfam" id="PF02874">
    <property type="entry name" value="ATP-synt_ab_N"/>
    <property type="match status" value="1"/>
</dbReference>
<dbReference type="Pfam" id="PF22919">
    <property type="entry name" value="ATP-synt_VA_C"/>
    <property type="match status" value="1"/>
</dbReference>
<dbReference type="SMART" id="SM00382">
    <property type="entry name" value="AAA"/>
    <property type="match status" value="1"/>
</dbReference>
<dbReference type="SUPFAM" id="SSF47917">
    <property type="entry name" value="C-terminal domain of alpha and beta subunits of F1 ATP synthase"/>
    <property type="match status" value="1"/>
</dbReference>
<dbReference type="SUPFAM" id="SSF50615">
    <property type="entry name" value="N-terminal domain of alpha and beta subunits of F1 ATP synthase"/>
    <property type="match status" value="1"/>
</dbReference>
<dbReference type="SUPFAM" id="SSF52540">
    <property type="entry name" value="P-loop containing nucleoside triphosphate hydrolases"/>
    <property type="match status" value="1"/>
</dbReference>
<dbReference type="PROSITE" id="PS00152">
    <property type="entry name" value="ATPASE_ALPHA_BETA"/>
    <property type="match status" value="1"/>
</dbReference>
<reference key="1">
    <citation type="journal article" date="2010" name="BMC Genomics">
        <title>A genomic perspective on the potential of Actinobacillus succinogenes for industrial succinate production.</title>
        <authorList>
            <person name="McKinlay J.B."/>
            <person name="Laivenieks M."/>
            <person name="Schindler B.D."/>
            <person name="McKinlay A.A."/>
            <person name="Siddaramappa S."/>
            <person name="Challacombe J.F."/>
            <person name="Lowry S.R."/>
            <person name="Clum A."/>
            <person name="Lapidus A.L."/>
            <person name="Burkhart K.B."/>
            <person name="Harkins V."/>
            <person name="Vieille C."/>
        </authorList>
    </citation>
    <scope>NUCLEOTIDE SEQUENCE [LARGE SCALE GENOMIC DNA]</scope>
    <source>
        <strain>ATCC 55618 / DSM 22257 / CCUG 43843 / 130Z</strain>
    </source>
</reference>
<protein>
    <recommendedName>
        <fullName evidence="1">ATP synthase subunit beta</fullName>
        <ecNumber evidence="1">7.1.2.2</ecNumber>
    </recommendedName>
    <alternativeName>
        <fullName evidence="1">ATP synthase F1 sector subunit beta</fullName>
    </alternativeName>
    <alternativeName>
        <fullName evidence="1">F-ATPase subunit beta</fullName>
    </alternativeName>
</protein>
<comment type="function">
    <text evidence="1">Produces ATP from ADP in the presence of a proton gradient across the membrane. The catalytic sites are hosted primarily by the beta subunits.</text>
</comment>
<comment type="catalytic activity">
    <reaction evidence="1">
        <text>ATP + H2O + 4 H(+)(in) = ADP + phosphate + 5 H(+)(out)</text>
        <dbReference type="Rhea" id="RHEA:57720"/>
        <dbReference type="ChEBI" id="CHEBI:15377"/>
        <dbReference type="ChEBI" id="CHEBI:15378"/>
        <dbReference type="ChEBI" id="CHEBI:30616"/>
        <dbReference type="ChEBI" id="CHEBI:43474"/>
        <dbReference type="ChEBI" id="CHEBI:456216"/>
        <dbReference type="EC" id="7.1.2.2"/>
    </reaction>
</comment>
<comment type="subunit">
    <text evidence="1">F-type ATPases have 2 components, CF(1) - the catalytic core - and CF(0) - the membrane proton channel. CF(1) has five subunits: alpha(3), beta(3), gamma(1), delta(1), epsilon(1). CF(0) has three main subunits: a(1), b(2) and c(9-12). The alpha and beta chains form an alternating ring which encloses part of the gamma chain. CF(1) is attached to CF(0) by a central stalk formed by the gamma and epsilon chains, while a peripheral stalk is formed by the delta and b chains.</text>
</comment>
<comment type="subcellular location">
    <subcellularLocation>
        <location evidence="1">Cell inner membrane</location>
        <topology evidence="1">Peripheral membrane protein</topology>
    </subcellularLocation>
</comment>
<comment type="similarity">
    <text evidence="1">Belongs to the ATPase alpha/beta chains family.</text>
</comment>
<evidence type="ECO:0000255" key="1">
    <source>
        <dbReference type="HAMAP-Rule" id="MF_01347"/>
    </source>
</evidence>
<keyword id="KW-0066">ATP synthesis</keyword>
<keyword id="KW-0067">ATP-binding</keyword>
<keyword id="KW-0997">Cell inner membrane</keyword>
<keyword id="KW-1003">Cell membrane</keyword>
<keyword id="KW-0139">CF(1)</keyword>
<keyword id="KW-0375">Hydrogen ion transport</keyword>
<keyword id="KW-0406">Ion transport</keyword>
<keyword id="KW-0472">Membrane</keyword>
<keyword id="KW-0547">Nucleotide-binding</keyword>
<keyword id="KW-1185">Reference proteome</keyword>
<keyword id="KW-1278">Translocase</keyword>
<keyword id="KW-0813">Transport</keyword>